<protein>
    <recommendedName>
        <fullName evidence="1">Large ribosomal subunit protein uL23</fullName>
    </recommendedName>
    <alternativeName>
        <fullName evidence="2">50S ribosomal protein L23</fullName>
    </alternativeName>
</protein>
<sequence length="99" mass="11114">MNSNEKIFSVLRAPRVSEKTARLQELSNQYVFEVSNEATKADVKAAVEQLFDVKVEAVNVVNVKGKNKSFRNRAGRRGDWRKAYVRLADGQSIDVTAKA</sequence>
<accession>B2FQ47</accession>
<evidence type="ECO:0000255" key="1">
    <source>
        <dbReference type="HAMAP-Rule" id="MF_01369"/>
    </source>
</evidence>
<evidence type="ECO:0000305" key="2"/>
<reference key="1">
    <citation type="journal article" date="2008" name="Genome Biol.">
        <title>The complete genome, comparative and functional analysis of Stenotrophomonas maltophilia reveals an organism heavily shielded by drug resistance determinants.</title>
        <authorList>
            <person name="Crossman L.C."/>
            <person name="Gould V.C."/>
            <person name="Dow J.M."/>
            <person name="Vernikos G.S."/>
            <person name="Okazaki A."/>
            <person name="Sebaihia M."/>
            <person name="Saunders D."/>
            <person name="Arrowsmith C."/>
            <person name="Carver T."/>
            <person name="Peters N."/>
            <person name="Adlem E."/>
            <person name="Kerhornou A."/>
            <person name="Lord A."/>
            <person name="Murphy L."/>
            <person name="Seeger K."/>
            <person name="Squares R."/>
            <person name="Rutter S."/>
            <person name="Quail M.A."/>
            <person name="Rajandream M.A."/>
            <person name="Harris D."/>
            <person name="Churcher C."/>
            <person name="Bentley S.D."/>
            <person name="Parkhill J."/>
            <person name="Thomson N.R."/>
            <person name="Avison M.B."/>
        </authorList>
    </citation>
    <scope>NUCLEOTIDE SEQUENCE [LARGE SCALE GENOMIC DNA]</scope>
    <source>
        <strain>K279a</strain>
    </source>
</reference>
<comment type="function">
    <text evidence="1">One of the early assembly proteins it binds 23S rRNA. One of the proteins that surrounds the polypeptide exit tunnel on the outside of the ribosome. Forms the main docking site for trigger factor binding to the ribosome.</text>
</comment>
<comment type="subunit">
    <text evidence="1">Part of the 50S ribosomal subunit. Contacts protein L29, and trigger factor when it is bound to the ribosome.</text>
</comment>
<comment type="similarity">
    <text evidence="1">Belongs to the universal ribosomal protein uL23 family.</text>
</comment>
<name>RL23_STRMK</name>
<gene>
    <name evidence="1" type="primary">rplW</name>
    <name type="ordered locus">Smlt0908</name>
</gene>
<feature type="chain" id="PRO_1000144608" description="Large ribosomal subunit protein uL23">
    <location>
        <begin position="1"/>
        <end position="99"/>
    </location>
</feature>
<dbReference type="EMBL" id="AM743169">
    <property type="protein sequence ID" value="CAQ44477.1"/>
    <property type="molecule type" value="Genomic_DNA"/>
</dbReference>
<dbReference type="RefSeq" id="WP_004145338.1">
    <property type="nucleotide sequence ID" value="NC_010943.1"/>
</dbReference>
<dbReference type="SMR" id="B2FQ47"/>
<dbReference type="EnsemblBacteria" id="CAQ44477">
    <property type="protein sequence ID" value="CAQ44477"/>
    <property type="gene ID" value="Smlt0908"/>
</dbReference>
<dbReference type="GeneID" id="97259936"/>
<dbReference type="KEGG" id="sml:Smlt0908"/>
<dbReference type="eggNOG" id="COG0089">
    <property type="taxonomic scope" value="Bacteria"/>
</dbReference>
<dbReference type="HOGENOM" id="CLU_037562_3_1_6"/>
<dbReference type="Proteomes" id="UP000008840">
    <property type="component" value="Chromosome"/>
</dbReference>
<dbReference type="GO" id="GO:1990904">
    <property type="term" value="C:ribonucleoprotein complex"/>
    <property type="evidence" value="ECO:0007669"/>
    <property type="project" value="UniProtKB-KW"/>
</dbReference>
<dbReference type="GO" id="GO:0005840">
    <property type="term" value="C:ribosome"/>
    <property type="evidence" value="ECO:0007669"/>
    <property type="project" value="UniProtKB-KW"/>
</dbReference>
<dbReference type="GO" id="GO:0019843">
    <property type="term" value="F:rRNA binding"/>
    <property type="evidence" value="ECO:0007669"/>
    <property type="project" value="UniProtKB-UniRule"/>
</dbReference>
<dbReference type="GO" id="GO:0003735">
    <property type="term" value="F:structural constituent of ribosome"/>
    <property type="evidence" value="ECO:0007669"/>
    <property type="project" value="InterPro"/>
</dbReference>
<dbReference type="GO" id="GO:0006412">
    <property type="term" value="P:translation"/>
    <property type="evidence" value="ECO:0007669"/>
    <property type="project" value="UniProtKB-UniRule"/>
</dbReference>
<dbReference type="FunFam" id="3.30.70.330:FF:000001">
    <property type="entry name" value="50S ribosomal protein L23"/>
    <property type="match status" value="1"/>
</dbReference>
<dbReference type="Gene3D" id="3.30.70.330">
    <property type="match status" value="1"/>
</dbReference>
<dbReference type="HAMAP" id="MF_01369_B">
    <property type="entry name" value="Ribosomal_uL23_B"/>
    <property type="match status" value="1"/>
</dbReference>
<dbReference type="InterPro" id="IPR012677">
    <property type="entry name" value="Nucleotide-bd_a/b_plait_sf"/>
</dbReference>
<dbReference type="InterPro" id="IPR013025">
    <property type="entry name" value="Ribosomal_uL23-like"/>
</dbReference>
<dbReference type="InterPro" id="IPR012678">
    <property type="entry name" value="Ribosomal_uL23/eL15/eS24_sf"/>
</dbReference>
<dbReference type="InterPro" id="IPR001014">
    <property type="entry name" value="Ribosomal_uL23_CS"/>
</dbReference>
<dbReference type="NCBIfam" id="NF004359">
    <property type="entry name" value="PRK05738.1-3"/>
    <property type="match status" value="1"/>
</dbReference>
<dbReference type="NCBIfam" id="NF004363">
    <property type="entry name" value="PRK05738.2-4"/>
    <property type="match status" value="1"/>
</dbReference>
<dbReference type="NCBIfam" id="NF004366">
    <property type="entry name" value="PRK05738.3-2"/>
    <property type="match status" value="1"/>
</dbReference>
<dbReference type="PANTHER" id="PTHR11620">
    <property type="entry name" value="60S RIBOSOMAL PROTEIN L23A"/>
    <property type="match status" value="1"/>
</dbReference>
<dbReference type="Pfam" id="PF00276">
    <property type="entry name" value="Ribosomal_L23"/>
    <property type="match status" value="1"/>
</dbReference>
<dbReference type="SUPFAM" id="SSF54189">
    <property type="entry name" value="Ribosomal proteins S24e, L23 and L15e"/>
    <property type="match status" value="1"/>
</dbReference>
<dbReference type="PROSITE" id="PS00050">
    <property type="entry name" value="RIBOSOMAL_L23"/>
    <property type="match status" value="1"/>
</dbReference>
<proteinExistence type="inferred from homology"/>
<organism>
    <name type="scientific">Stenotrophomonas maltophilia (strain K279a)</name>
    <dbReference type="NCBI Taxonomy" id="522373"/>
    <lineage>
        <taxon>Bacteria</taxon>
        <taxon>Pseudomonadati</taxon>
        <taxon>Pseudomonadota</taxon>
        <taxon>Gammaproteobacteria</taxon>
        <taxon>Lysobacterales</taxon>
        <taxon>Lysobacteraceae</taxon>
        <taxon>Stenotrophomonas</taxon>
        <taxon>Stenotrophomonas maltophilia group</taxon>
    </lineage>
</organism>
<keyword id="KW-1185">Reference proteome</keyword>
<keyword id="KW-0687">Ribonucleoprotein</keyword>
<keyword id="KW-0689">Ribosomal protein</keyword>
<keyword id="KW-0694">RNA-binding</keyword>
<keyword id="KW-0699">rRNA-binding</keyword>